<accession>Q9A9C8</accession>
<protein>
    <recommendedName>
        <fullName evidence="1">tRNA uridine(34) hydroxylase</fullName>
        <ecNumber evidence="1">1.14.-.-</ecNumber>
    </recommendedName>
    <alternativeName>
        <fullName evidence="1">tRNA hydroxylation protein O</fullName>
    </alternativeName>
</protein>
<dbReference type="EC" id="1.14.-.-" evidence="1"/>
<dbReference type="EMBL" id="AE005673">
    <property type="protein sequence ID" value="AAK23044.1"/>
    <property type="molecule type" value="Genomic_DNA"/>
</dbReference>
<dbReference type="PIR" id="H87380">
    <property type="entry name" value="H87380"/>
</dbReference>
<dbReference type="RefSeq" id="NP_419876.1">
    <property type="nucleotide sequence ID" value="NC_002696.2"/>
</dbReference>
<dbReference type="RefSeq" id="WP_010918944.1">
    <property type="nucleotide sequence ID" value="NC_002696.2"/>
</dbReference>
<dbReference type="SMR" id="Q9A9C8"/>
<dbReference type="STRING" id="190650.CC_1060"/>
<dbReference type="EnsemblBacteria" id="AAK23044">
    <property type="protein sequence ID" value="AAK23044"/>
    <property type="gene ID" value="CC_1060"/>
</dbReference>
<dbReference type="KEGG" id="ccr:CC_1060"/>
<dbReference type="PATRIC" id="fig|190650.5.peg.1077"/>
<dbReference type="eggNOG" id="COG1054">
    <property type="taxonomic scope" value="Bacteria"/>
</dbReference>
<dbReference type="HOGENOM" id="CLU_038878_0_0_5"/>
<dbReference type="BioCyc" id="CAULO:CC1060-MONOMER"/>
<dbReference type="Proteomes" id="UP000001816">
    <property type="component" value="Chromosome"/>
</dbReference>
<dbReference type="GO" id="GO:0016705">
    <property type="term" value="F:oxidoreductase activity, acting on paired donors, with incorporation or reduction of molecular oxygen"/>
    <property type="evidence" value="ECO:0007669"/>
    <property type="project" value="UniProtKB-UniRule"/>
</dbReference>
<dbReference type="GO" id="GO:0006400">
    <property type="term" value="P:tRNA modification"/>
    <property type="evidence" value="ECO:0007669"/>
    <property type="project" value="UniProtKB-UniRule"/>
</dbReference>
<dbReference type="CDD" id="cd01518">
    <property type="entry name" value="RHOD_YceA"/>
    <property type="match status" value="1"/>
</dbReference>
<dbReference type="Gene3D" id="3.30.70.100">
    <property type="match status" value="1"/>
</dbReference>
<dbReference type="Gene3D" id="3.40.250.10">
    <property type="entry name" value="Rhodanese-like domain"/>
    <property type="match status" value="1"/>
</dbReference>
<dbReference type="HAMAP" id="MF_00469">
    <property type="entry name" value="TrhO"/>
    <property type="match status" value="1"/>
</dbReference>
<dbReference type="InterPro" id="IPR001763">
    <property type="entry name" value="Rhodanese-like_dom"/>
</dbReference>
<dbReference type="InterPro" id="IPR036873">
    <property type="entry name" value="Rhodanese-like_dom_sf"/>
</dbReference>
<dbReference type="InterPro" id="IPR020936">
    <property type="entry name" value="TrhO"/>
</dbReference>
<dbReference type="InterPro" id="IPR040503">
    <property type="entry name" value="TRHO_N"/>
</dbReference>
<dbReference type="NCBIfam" id="NF001136">
    <property type="entry name" value="PRK00142.1-4"/>
    <property type="match status" value="1"/>
</dbReference>
<dbReference type="PANTHER" id="PTHR43268:SF3">
    <property type="entry name" value="RHODANESE-LIKE DOMAIN-CONTAINING PROTEIN 7-RELATED"/>
    <property type="match status" value="1"/>
</dbReference>
<dbReference type="PANTHER" id="PTHR43268">
    <property type="entry name" value="THIOSULFATE SULFURTRANSFERASE/RHODANESE-LIKE DOMAIN-CONTAINING PROTEIN 2"/>
    <property type="match status" value="1"/>
</dbReference>
<dbReference type="Pfam" id="PF00581">
    <property type="entry name" value="Rhodanese"/>
    <property type="match status" value="1"/>
</dbReference>
<dbReference type="Pfam" id="PF17773">
    <property type="entry name" value="UPF0176_N"/>
    <property type="match status" value="1"/>
</dbReference>
<dbReference type="SMART" id="SM00450">
    <property type="entry name" value="RHOD"/>
    <property type="match status" value="1"/>
</dbReference>
<dbReference type="SUPFAM" id="SSF52821">
    <property type="entry name" value="Rhodanese/Cell cycle control phosphatase"/>
    <property type="match status" value="1"/>
</dbReference>
<dbReference type="PROSITE" id="PS50206">
    <property type="entry name" value="RHODANESE_3"/>
    <property type="match status" value="1"/>
</dbReference>
<reference key="1">
    <citation type="journal article" date="2001" name="Proc. Natl. Acad. Sci. U.S.A.">
        <title>Complete genome sequence of Caulobacter crescentus.</title>
        <authorList>
            <person name="Nierman W.C."/>
            <person name="Feldblyum T.V."/>
            <person name="Laub M.T."/>
            <person name="Paulsen I.T."/>
            <person name="Nelson K.E."/>
            <person name="Eisen J.A."/>
            <person name="Heidelberg J.F."/>
            <person name="Alley M.R.K."/>
            <person name="Ohta N."/>
            <person name="Maddock J.R."/>
            <person name="Potocka I."/>
            <person name="Nelson W.C."/>
            <person name="Newton A."/>
            <person name="Stephens C."/>
            <person name="Phadke N.D."/>
            <person name="Ely B."/>
            <person name="DeBoy R.T."/>
            <person name="Dodson R.J."/>
            <person name="Durkin A.S."/>
            <person name="Gwinn M.L."/>
            <person name="Haft D.H."/>
            <person name="Kolonay J.F."/>
            <person name="Smit J."/>
            <person name="Craven M.B."/>
            <person name="Khouri H.M."/>
            <person name="Shetty J."/>
            <person name="Berry K.J."/>
            <person name="Utterback T.R."/>
            <person name="Tran K."/>
            <person name="Wolf A.M."/>
            <person name="Vamathevan J.J."/>
            <person name="Ermolaeva M.D."/>
            <person name="White O."/>
            <person name="Salzberg S.L."/>
            <person name="Venter J.C."/>
            <person name="Shapiro L."/>
            <person name="Fraser C.M."/>
        </authorList>
    </citation>
    <scope>NUCLEOTIDE SEQUENCE [LARGE SCALE GENOMIC DNA]</scope>
    <source>
        <strain>ATCC 19089 / CIP 103742 / CB 15</strain>
    </source>
</reference>
<organism>
    <name type="scientific">Caulobacter vibrioides (strain ATCC 19089 / CIP 103742 / CB 15)</name>
    <name type="common">Caulobacter crescentus</name>
    <dbReference type="NCBI Taxonomy" id="190650"/>
    <lineage>
        <taxon>Bacteria</taxon>
        <taxon>Pseudomonadati</taxon>
        <taxon>Pseudomonadota</taxon>
        <taxon>Alphaproteobacteria</taxon>
        <taxon>Caulobacterales</taxon>
        <taxon>Caulobacteraceae</taxon>
        <taxon>Caulobacter</taxon>
    </lineage>
</organism>
<name>TRHO_CAUVC</name>
<gene>
    <name evidence="1" type="primary">trhO</name>
    <name type="ordered locus">CC_1060</name>
</gene>
<feature type="chain" id="PRO_0000161460" description="tRNA uridine(34) hydroxylase">
    <location>
        <begin position="1"/>
        <end position="315"/>
    </location>
</feature>
<feature type="domain" description="Rhodanese" evidence="1">
    <location>
        <begin position="122"/>
        <end position="223"/>
    </location>
</feature>
<feature type="active site" description="Cysteine persulfide intermediate" evidence="1">
    <location>
        <position position="183"/>
    </location>
</feature>
<evidence type="ECO:0000255" key="1">
    <source>
        <dbReference type="HAMAP-Rule" id="MF_00469"/>
    </source>
</evidence>
<keyword id="KW-0560">Oxidoreductase</keyword>
<keyword id="KW-1185">Reference proteome</keyword>
<keyword id="KW-0819">tRNA processing</keyword>
<comment type="function">
    <text evidence="1">Catalyzes oxygen-dependent 5-hydroxyuridine (ho5U) modification at position 34 in tRNAs.</text>
</comment>
<comment type="catalytic activity">
    <reaction evidence="1">
        <text>uridine(34) in tRNA + AH2 + O2 = 5-hydroxyuridine(34) in tRNA + A + H2O</text>
        <dbReference type="Rhea" id="RHEA:64224"/>
        <dbReference type="Rhea" id="RHEA-COMP:11727"/>
        <dbReference type="Rhea" id="RHEA-COMP:13381"/>
        <dbReference type="ChEBI" id="CHEBI:13193"/>
        <dbReference type="ChEBI" id="CHEBI:15377"/>
        <dbReference type="ChEBI" id="CHEBI:15379"/>
        <dbReference type="ChEBI" id="CHEBI:17499"/>
        <dbReference type="ChEBI" id="CHEBI:65315"/>
        <dbReference type="ChEBI" id="CHEBI:136877"/>
    </reaction>
</comment>
<comment type="similarity">
    <text evidence="1">Belongs to the TrhO family.</text>
</comment>
<proteinExistence type="inferred from homology"/>
<sequence length="315" mass="34547">MASYRVAALYRFTRFEDPAAIQGPLAALCCSLGVKGTLLLAREGINGTIAGEDAAIEAVLAHIRALPGCADLTPKTAWAERMPFYRMKVRLKKEIVTLGEPDLDPTDAGTYVEPADWNALISDPDVLVIDTRNAYEVAVGRFEGAIDPQTASFADFPAWFRDWRKSVEAQRGPEAPLKVAMYCTGGIRCEKSTAFLKAEGVEQVFHLKGGVLDYLEQIPQPESLWRGECFVFDERVSVGHGLVKGDHVLCRGCRMPVSPQDQASPLYVEGVACPACHDQRNEEQKARAAERHRQVLHCEALGVDHVGATLPTKID</sequence>